<feature type="chain" id="PRO_1000025831" description="Chaperonin GroEL">
    <location>
        <begin position="1"/>
        <end position="544"/>
    </location>
</feature>
<feature type="region of interest" description="Disordered" evidence="2">
    <location>
        <begin position="525"/>
        <end position="544"/>
    </location>
</feature>
<feature type="compositionally biased region" description="Low complexity" evidence="2">
    <location>
        <begin position="525"/>
        <end position="537"/>
    </location>
</feature>
<feature type="binding site" evidence="1">
    <location>
        <begin position="30"/>
        <end position="33"/>
    </location>
    <ligand>
        <name>ATP</name>
        <dbReference type="ChEBI" id="CHEBI:30616"/>
    </ligand>
</feature>
<feature type="binding site" evidence="1">
    <location>
        <position position="51"/>
    </location>
    <ligand>
        <name>ATP</name>
        <dbReference type="ChEBI" id="CHEBI:30616"/>
    </ligand>
</feature>
<feature type="binding site" evidence="1">
    <location>
        <begin position="87"/>
        <end position="91"/>
    </location>
    <ligand>
        <name>ATP</name>
        <dbReference type="ChEBI" id="CHEBI:30616"/>
    </ligand>
</feature>
<feature type="binding site" evidence="1">
    <location>
        <position position="415"/>
    </location>
    <ligand>
        <name>ATP</name>
        <dbReference type="ChEBI" id="CHEBI:30616"/>
    </ligand>
</feature>
<feature type="binding site" evidence="1">
    <location>
        <begin position="479"/>
        <end position="481"/>
    </location>
    <ligand>
        <name>ATP</name>
        <dbReference type="ChEBI" id="CHEBI:30616"/>
    </ligand>
</feature>
<feature type="binding site" evidence="1">
    <location>
        <position position="495"/>
    </location>
    <ligand>
        <name>ATP</name>
        <dbReference type="ChEBI" id="CHEBI:30616"/>
    </ligand>
</feature>
<dbReference type="EC" id="5.6.1.7" evidence="1"/>
<dbReference type="EMBL" id="CP000488">
    <property type="protein sequence ID" value="ABL02314.1"/>
    <property type="molecule type" value="Genomic_DNA"/>
</dbReference>
<dbReference type="RefSeq" id="WP_011737939.1">
    <property type="nucleotide sequence ID" value="NC_008610.1"/>
</dbReference>
<dbReference type="SMR" id="A1AWK7"/>
<dbReference type="STRING" id="413404.Rmag_0562"/>
<dbReference type="KEGG" id="rma:Rmag_0562"/>
<dbReference type="eggNOG" id="COG0459">
    <property type="taxonomic scope" value="Bacteria"/>
</dbReference>
<dbReference type="HOGENOM" id="CLU_016503_3_0_6"/>
<dbReference type="OrthoDB" id="9766614at2"/>
<dbReference type="Proteomes" id="UP000002587">
    <property type="component" value="Chromosome"/>
</dbReference>
<dbReference type="GO" id="GO:0005737">
    <property type="term" value="C:cytoplasm"/>
    <property type="evidence" value="ECO:0007669"/>
    <property type="project" value="UniProtKB-SubCell"/>
</dbReference>
<dbReference type="GO" id="GO:0005524">
    <property type="term" value="F:ATP binding"/>
    <property type="evidence" value="ECO:0007669"/>
    <property type="project" value="UniProtKB-UniRule"/>
</dbReference>
<dbReference type="GO" id="GO:0140662">
    <property type="term" value="F:ATP-dependent protein folding chaperone"/>
    <property type="evidence" value="ECO:0007669"/>
    <property type="project" value="InterPro"/>
</dbReference>
<dbReference type="GO" id="GO:0016853">
    <property type="term" value="F:isomerase activity"/>
    <property type="evidence" value="ECO:0007669"/>
    <property type="project" value="UniProtKB-KW"/>
</dbReference>
<dbReference type="GO" id="GO:0051082">
    <property type="term" value="F:unfolded protein binding"/>
    <property type="evidence" value="ECO:0007669"/>
    <property type="project" value="UniProtKB-UniRule"/>
</dbReference>
<dbReference type="GO" id="GO:0042026">
    <property type="term" value="P:protein refolding"/>
    <property type="evidence" value="ECO:0007669"/>
    <property type="project" value="UniProtKB-UniRule"/>
</dbReference>
<dbReference type="CDD" id="cd03344">
    <property type="entry name" value="GroEL"/>
    <property type="match status" value="1"/>
</dbReference>
<dbReference type="FunFam" id="1.10.560.10:FF:000001">
    <property type="entry name" value="60 kDa chaperonin"/>
    <property type="match status" value="1"/>
</dbReference>
<dbReference type="FunFam" id="3.50.7.10:FF:000001">
    <property type="entry name" value="60 kDa chaperonin"/>
    <property type="match status" value="1"/>
</dbReference>
<dbReference type="Gene3D" id="3.50.7.10">
    <property type="entry name" value="GroEL"/>
    <property type="match status" value="1"/>
</dbReference>
<dbReference type="Gene3D" id="1.10.560.10">
    <property type="entry name" value="GroEL-like equatorial domain"/>
    <property type="match status" value="1"/>
</dbReference>
<dbReference type="Gene3D" id="3.30.260.10">
    <property type="entry name" value="TCP-1-like chaperonin intermediate domain"/>
    <property type="match status" value="1"/>
</dbReference>
<dbReference type="HAMAP" id="MF_00600">
    <property type="entry name" value="CH60"/>
    <property type="match status" value="1"/>
</dbReference>
<dbReference type="InterPro" id="IPR018370">
    <property type="entry name" value="Chaperonin_Cpn60_CS"/>
</dbReference>
<dbReference type="InterPro" id="IPR001844">
    <property type="entry name" value="Cpn60/GroEL"/>
</dbReference>
<dbReference type="InterPro" id="IPR002423">
    <property type="entry name" value="Cpn60/GroEL/TCP-1"/>
</dbReference>
<dbReference type="InterPro" id="IPR027409">
    <property type="entry name" value="GroEL-like_apical_dom_sf"/>
</dbReference>
<dbReference type="InterPro" id="IPR027413">
    <property type="entry name" value="GROEL-like_equatorial_sf"/>
</dbReference>
<dbReference type="InterPro" id="IPR027410">
    <property type="entry name" value="TCP-1-like_intermed_sf"/>
</dbReference>
<dbReference type="NCBIfam" id="TIGR02348">
    <property type="entry name" value="GroEL"/>
    <property type="match status" value="1"/>
</dbReference>
<dbReference type="NCBIfam" id="NF000592">
    <property type="entry name" value="PRK00013.1"/>
    <property type="match status" value="1"/>
</dbReference>
<dbReference type="NCBIfam" id="NF009487">
    <property type="entry name" value="PRK12849.1"/>
    <property type="match status" value="1"/>
</dbReference>
<dbReference type="NCBIfam" id="NF009488">
    <property type="entry name" value="PRK12850.1"/>
    <property type="match status" value="1"/>
</dbReference>
<dbReference type="NCBIfam" id="NF009489">
    <property type="entry name" value="PRK12851.1"/>
    <property type="match status" value="1"/>
</dbReference>
<dbReference type="PANTHER" id="PTHR45633">
    <property type="entry name" value="60 KDA HEAT SHOCK PROTEIN, MITOCHONDRIAL"/>
    <property type="match status" value="1"/>
</dbReference>
<dbReference type="Pfam" id="PF00118">
    <property type="entry name" value="Cpn60_TCP1"/>
    <property type="match status" value="1"/>
</dbReference>
<dbReference type="PRINTS" id="PR00298">
    <property type="entry name" value="CHAPERONIN60"/>
</dbReference>
<dbReference type="SUPFAM" id="SSF52029">
    <property type="entry name" value="GroEL apical domain-like"/>
    <property type="match status" value="1"/>
</dbReference>
<dbReference type="SUPFAM" id="SSF48592">
    <property type="entry name" value="GroEL equatorial domain-like"/>
    <property type="match status" value="1"/>
</dbReference>
<dbReference type="SUPFAM" id="SSF54849">
    <property type="entry name" value="GroEL-intermediate domain like"/>
    <property type="match status" value="1"/>
</dbReference>
<dbReference type="PROSITE" id="PS00296">
    <property type="entry name" value="CHAPERONINS_CPN60"/>
    <property type="match status" value="1"/>
</dbReference>
<proteinExistence type="inferred from homology"/>
<sequence>MSAKDIKFGSEARNLMLDGVNMLANAVKVTLGPKGRNVVLDKSFGGPTITKDGVSVAQEITLEGKFENMGAQMVKEVASKTNDIAGDGTTTATVLAQALVIEGVKSVAAGMNPMDLKRGIDKATETAVNALREFSQPCNDTKAIAQVGTISANSDISVGDIIADAMEKVGQAGVITVEEGSGFENELDVVEGMQFDRGYLSPYFVNNQESMTANLETPFVLLHDGKISNIRDLLPTLEAVQKSGKALLIIAEDIDGEALATLVVNNMRGIVKVAAVKAPGFGDRRKAILEDIAVLTGGMVISEEVGLSLEKVTEEHLGTAKRIEIGKENTVIVDGAGKKVDIDGRIAQIKAQIETTTSDYDKEKLLERLAKLSGGVAVIKVGAATEVEMKEKKGRVDDALHATRAAVEEGVVPGGGVALVRVIKALDGLTGDNHDQNIGIDIAKRAMEAPLRQIVTNGGGEASVILNEVAKGKDNYGYNAATEKYGDMLKMGILDPTKVVRAALQHAASISGLMITTEAMITDTPQDTPATAAAPDMGGMGGMM</sequence>
<gene>
    <name evidence="1" type="primary">groEL</name>
    <name evidence="1" type="synonym">groL</name>
    <name type="ordered locus">Rmag_0562</name>
</gene>
<comment type="function">
    <text evidence="1">Together with its co-chaperonin GroES, plays an essential role in assisting protein folding. The GroEL-GroES system forms a nano-cage that allows encapsulation of the non-native substrate proteins and provides a physical environment optimized to promote and accelerate protein folding.</text>
</comment>
<comment type="catalytic activity">
    <reaction evidence="1">
        <text>ATP + H2O + a folded polypeptide = ADP + phosphate + an unfolded polypeptide.</text>
        <dbReference type="EC" id="5.6.1.7"/>
    </reaction>
</comment>
<comment type="subunit">
    <text evidence="1">Forms a cylinder of 14 subunits composed of two heptameric rings stacked back-to-back. Interacts with the co-chaperonin GroES.</text>
</comment>
<comment type="subcellular location">
    <subcellularLocation>
        <location evidence="1">Cytoplasm</location>
    </subcellularLocation>
</comment>
<comment type="similarity">
    <text evidence="1">Belongs to the chaperonin (HSP60) family.</text>
</comment>
<name>CH60_RUTMC</name>
<reference key="1">
    <citation type="journal article" date="2007" name="Science">
        <title>The Calyptogena magnifica chemoautotrophic symbiont genome.</title>
        <authorList>
            <person name="Newton I.L.G."/>
            <person name="Woyke T."/>
            <person name="Auchtung T.A."/>
            <person name="Dilly G.F."/>
            <person name="Dutton R.J."/>
            <person name="Fisher M.C."/>
            <person name="Fontanez K.M."/>
            <person name="Lau E."/>
            <person name="Stewart F.J."/>
            <person name="Richardson P.M."/>
            <person name="Barry K.W."/>
            <person name="Saunders E."/>
            <person name="Detter J.C."/>
            <person name="Wu D."/>
            <person name="Eisen J.A."/>
            <person name="Cavanaugh C.M."/>
        </authorList>
    </citation>
    <scope>NUCLEOTIDE SEQUENCE [LARGE SCALE GENOMIC DNA]</scope>
</reference>
<protein>
    <recommendedName>
        <fullName evidence="1">Chaperonin GroEL</fullName>
        <ecNumber evidence="1">5.6.1.7</ecNumber>
    </recommendedName>
    <alternativeName>
        <fullName evidence="1">60 kDa chaperonin</fullName>
    </alternativeName>
    <alternativeName>
        <fullName evidence="1">Chaperonin-60</fullName>
        <shortName evidence="1">Cpn60</shortName>
    </alternativeName>
</protein>
<accession>A1AWK7</accession>
<evidence type="ECO:0000255" key="1">
    <source>
        <dbReference type="HAMAP-Rule" id="MF_00600"/>
    </source>
</evidence>
<evidence type="ECO:0000256" key="2">
    <source>
        <dbReference type="SAM" id="MobiDB-lite"/>
    </source>
</evidence>
<keyword id="KW-0067">ATP-binding</keyword>
<keyword id="KW-0143">Chaperone</keyword>
<keyword id="KW-0963">Cytoplasm</keyword>
<keyword id="KW-0413">Isomerase</keyword>
<keyword id="KW-0547">Nucleotide-binding</keyword>
<organism>
    <name type="scientific">Ruthia magnifica subsp. Calyptogena magnifica</name>
    <dbReference type="NCBI Taxonomy" id="413404"/>
    <lineage>
        <taxon>Bacteria</taxon>
        <taxon>Pseudomonadati</taxon>
        <taxon>Pseudomonadota</taxon>
        <taxon>Gammaproteobacteria</taxon>
        <taxon>Candidatus Pseudothioglobaceae</taxon>
        <taxon>Candidatus Ruthturnera</taxon>
    </lineage>
</organism>